<keyword id="KW-0012">Acyltransferase</keyword>
<keyword id="KW-0028">Amino-acid biosynthesis</keyword>
<keyword id="KW-0963">Cytoplasm</keyword>
<keyword id="KW-0486">Methionine biosynthesis</keyword>
<keyword id="KW-1185">Reference proteome</keyword>
<keyword id="KW-0808">Transferase</keyword>
<sequence length="383" mass="42609">MPVEIPADSVGLVTPQTVTFSAPLELECGRSLPGYTLTYETYGTLNAQRSNAILLCHALSGDHHAAGYHSMDDRKPGWWEHLLGPGKAMDTERFFFVCANFIGSCKGSTGPASTNPETGAPWGLDFPMVTVRDWVKTQAELADYLGIEQWAAVVGGSLGGMQVMQWSMDYPERLRHAVVIAAAPKLTAQNIAFNEVCRQAIMTDPEFYNGRYYAHNTKPRRGLSLARMIGHITYLSDNAMRTKFGRDTRGGKAFSFGFDVDFEVESYLRYQGSSFVERFDANSYLYITKALDYFDPASTWGGNLAEAFASTRANFLVISFSSDWRFSPERSREIVQALYTCNRDVSYAEIEAEHGHDSFLMPIPQYVAVLSTYLGRVAEEIGA</sequence>
<name>METXS_ACIF2</name>
<gene>
    <name evidence="1" type="primary">metXS</name>
    <name type="ordered locus">AFE_0293</name>
</gene>
<feature type="chain" id="PRO_1000119457" description="Homoserine O-succinyltransferase">
    <location>
        <begin position="1"/>
        <end position="383"/>
    </location>
</feature>
<feature type="domain" description="AB hydrolase-1" evidence="1">
    <location>
        <begin position="51"/>
        <end position="360"/>
    </location>
</feature>
<feature type="active site" description="Nucleophile" evidence="1">
    <location>
        <position position="157"/>
    </location>
</feature>
<feature type="active site" evidence="1">
    <location>
        <position position="323"/>
    </location>
</feature>
<feature type="active site" evidence="1">
    <location>
        <position position="356"/>
    </location>
</feature>
<feature type="binding site" evidence="1">
    <location>
        <position position="227"/>
    </location>
    <ligand>
        <name>substrate</name>
    </ligand>
</feature>
<feature type="binding site" evidence="1">
    <location>
        <position position="357"/>
    </location>
    <ligand>
        <name>substrate</name>
    </ligand>
</feature>
<feature type="site" description="Important for acyl-CoA specificity" evidence="1">
    <location>
        <position position="325"/>
    </location>
</feature>
<proteinExistence type="inferred from homology"/>
<dbReference type="EC" id="2.3.1.46" evidence="1"/>
<dbReference type="EMBL" id="CP001219">
    <property type="protein sequence ID" value="ACK78927.1"/>
    <property type="molecule type" value="Genomic_DNA"/>
</dbReference>
<dbReference type="RefSeq" id="WP_012536069.1">
    <property type="nucleotide sequence ID" value="NC_011761.1"/>
</dbReference>
<dbReference type="SMR" id="B7J437"/>
<dbReference type="STRING" id="243159.AFE_0293"/>
<dbReference type="ESTHER" id="acif2-metx">
    <property type="family name" value="Homoserine_transacetylase"/>
</dbReference>
<dbReference type="PaxDb" id="243159-AFE_0293"/>
<dbReference type="GeneID" id="65279674"/>
<dbReference type="KEGG" id="afr:AFE_0293"/>
<dbReference type="eggNOG" id="COG2021">
    <property type="taxonomic scope" value="Bacteria"/>
</dbReference>
<dbReference type="HOGENOM" id="CLU_028760_1_2_6"/>
<dbReference type="UniPathway" id="UPA00051">
    <property type="reaction ID" value="UER00075"/>
</dbReference>
<dbReference type="Proteomes" id="UP000001362">
    <property type="component" value="Chromosome"/>
</dbReference>
<dbReference type="GO" id="GO:0005737">
    <property type="term" value="C:cytoplasm"/>
    <property type="evidence" value="ECO:0007669"/>
    <property type="project" value="UniProtKB-SubCell"/>
</dbReference>
<dbReference type="GO" id="GO:0004414">
    <property type="term" value="F:homoserine O-acetyltransferase activity"/>
    <property type="evidence" value="ECO:0007669"/>
    <property type="project" value="TreeGrafter"/>
</dbReference>
<dbReference type="GO" id="GO:0008899">
    <property type="term" value="F:homoserine O-succinyltransferase activity"/>
    <property type="evidence" value="ECO:0007669"/>
    <property type="project" value="UniProtKB-UniRule"/>
</dbReference>
<dbReference type="GO" id="GO:0009092">
    <property type="term" value="P:homoserine metabolic process"/>
    <property type="evidence" value="ECO:0007669"/>
    <property type="project" value="TreeGrafter"/>
</dbReference>
<dbReference type="GO" id="GO:0009086">
    <property type="term" value="P:methionine biosynthetic process"/>
    <property type="evidence" value="ECO:0007669"/>
    <property type="project" value="UniProtKB-UniRule"/>
</dbReference>
<dbReference type="FunFam" id="1.10.1740.110:FF:000001">
    <property type="entry name" value="Homoserine O-acetyltransferase"/>
    <property type="match status" value="1"/>
</dbReference>
<dbReference type="Gene3D" id="1.10.1740.110">
    <property type="match status" value="1"/>
</dbReference>
<dbReference type="Gene3D" id="3.40.50.1820">
    <property type="entry name" value="alpha/beta hydrolase"/>
    <property type="match status" value="1"/>
</dbReference>
<dbReference type="HAMAP" id="MF_00296">
    <property type="entry name" value="MetX_acyltransf"/>
    <property type="match status" value="1"/>
</dbReference>
<dbReference type="InterPro" id="IPR000073">
    <property type="entry name" value="AB_hydrolase_1"/>
</dbReference>
<dbReference type="InterPro" id="IPR029058">
    <property type="entry name" value="AB_hydrolase_fold"/>
</dbReference>
<dbReference type="InterPro" id="IPR008220">
    <property type="entry name" value="HAT_MetX-like"/>
</dbReference>
<dbReference type="NCBIfam" id="TIGR01392">
    <property type="entry name" value="homoserO_Ac_trn"/>
    <property type="match status" value="1"/>
</dbReference>
<dbReference type="NCBIfam" id="NF001209">
    <property type="entry name" value="PRK00175.1"/>
    <property type="match status" value="1"/>
</dbReference>
<dbReference type="PANTHER" id="PTHR32268">
    <property type="entry name" value="HOMOSERINE O-ACETYLTRANSFERASE"/>
    <property type="match status" value="1"/>
</dbReference>
<dbReference type="PANTHER" id="PTHR32268:SF11">
    <property type="entry name" value="HOMOSERINE O-ACETYLTRANSFERASE"/>
    <property type="match status" value="1"/>
</dbReference>
<dbReference type="Pfam" id="PF00561">
    <property type="entry name" value="Abhydrolase_1"/>
    <property type="match status" value="1"/>
</dbReference>
<dbReference type="PIRSF" id="PIRSF000443">
    <property type="entry name" value="Homoser_Ac_trans"/>
    <property type="match status" value="1"/>
</dbReference>
<dbReference type="SUPFAM" id="SSF53474">
    <property type="entry name" value="alpha/beta-Hydrolases"/>
    <property type="match status" value="1"/>
</dbReference>
<evidence type="ECO:0000255" key="1">
    <source>
        <dbReference type="HAMAP-Rule" id="MF_00296"/>
    </source>
</evidence>
<reference key="1">
    <citation type="journal article" date="2008" name="BMC Genomics">
        <title>Acidithiobacillus ferrooxidans metabolism: from genome sequence to industrial applications.</title>
        <authorList>
            <person name="Valdes J."/>
            <person name="Pedroso I."/>
            <person name="Quatrini R."/>
            <person name="Dodson R.J."/>
            <person name="Tettelin H."/>
            <person name="Blake R. II"/>
            <person name="Eisen J.A."/>
            <person name="Holmes D.S."/>
        </authorList>
    </citation>
    <scope>NUCLEOTIDE SEQUENCE [LARGE SCALE GENOMIC DNA]</scope>
    <source>
        <strain>ATCC 23270 / DSM 14882 / CIP 104768 / NCIMB 8455</strain>
    </source>
</reference>
<accession>B7J437</accession>
<protein>
    <recommendedName>
        <fullName evidence="1">Homoserine O-succinyltransferase</fullName>
        <shortName evidence="1">HST</shortName>
        <ecNumber evidence="1">2.3.1.46</ecNumber>
    </recommendedName>
    <alternativeName>
        <fullName evidence="1">Homoserine transsuccinylase</fullName>
        <shortName evidence="1">HTS</shortName>
    </alternativeName>
</protein>
<organism>
    <name type="scientific">Acidithiobacillus ferrooxidans (strain ATCC 23270 / DSM 14882 / CIP 104768 / NCIMB 8455)</name>
    <name type="common">Ferrobacillus ferrooxidans (strain ATCC 23270)</name>
    <dbReference type="NCBI Taxonomy" id="243159"/>
    <lineage>
        <taxon>Bacteria</taxon>
        <taxon>Pseudomonadati</taxon>
        <taxon>Pseudomonadota</taxon>
        <taxon>Acidithiobacillia</taxon>
        <taxon>Acidithiobacillales</taxon>
        <taxon>Acidithiobacillaceae</taxon>
        <taxon>Acidithiobacillus</taxon>
    </lineage>
</organism>
<comment type="function">
    <text evidence="1">Transfers a succinyl group from succinyl-CoA to L-homoserine, forming succinyl-L-homoserine.</text>
</comment>
<comment type="catalytic activity">
    <reaction evidence="1">
        <text>L-homoserine + succinyl-CoA = O-succinyl-L-homoserine + CoA</text>
        <dbReference type="Rhea" id="RHEA:22008"/>
        <dbReference type="ChEBI" id="CHEBI:57287"/>
        <dbReference type="ChEBI" id="CHEBI:57292"/>
        <dbReference type="ChEBI" id="CHEBI:57476"/>
        <dbReference type="ChEBI" id="CHEBI:57661"/>
        <dbReference type="EC" id="2.3.1.46"/>
    </reaction>
</comment>
<comment type="pathway">
    <text evidence="1">Amino-acid biosynthesis; L-methionine biosynthesis via de novo pathway; O-succinyl-L-homoserine from L-homoserine: step 1/1.</text>
</comment>
<comment type="subunit">
    <text evidence="1">Homodimer.</text>
</comment>
<comment type="subcellular location">
    <subcellularLocation>
        <location evidence="1">Cytoplasm</location>
    </subcellularLocation>
</comment>
<comment type="similarity">
    <text evidence="1">Belongs to the AB hydrolase superfamily. MetX family.</text>
</comment>